<comment type="catalytic activity">
    <reaction evidence="1">
        <text>2-formamido-N(1)-(5-O-phospho-beta-D-ribosyl)acetamidine + ATP = 5-amino-1-(5-phospho-beta-D-ribosyl)imidazole + ADP + phosphate + H(+)</text>
        <dbReference type="Rhea" id="RHEA:23032"/>
        <dbReference type="ChEBI" id="CHEBI:15378"/>
        <dbReference type="ChEBI" id="CHEBI:30616"/>
        <dbReference type="ChEBI" id="CHEBI:43474"/>
        <dbReference type="ChEBI" id="CHEBI:137981"/>
        <dbReference type="ChEBI" id="CHEBI:147287"/>
        <dbReference type="ChEBI" id="CHEBI:456216"/>
        <dbReference type="EC" id="6.3.3.1"/>
    </reaction>
</comment>
<comment type="pathway">
    <text evidence="1">Purine metabolism; IMP biosynthesis via de novo pathway; 5-amino-1-(5-phospho-D-ribosyl)imidazole from N(2)-formyl-N(1)-(5-phospho-D-ribosyl)glycinamide: step 2/2.</text>
</comment>
<comment type="subcellular location">
    <subcellularLocation>
        <location evidence="1">Cytoplasm</location>
    </subcellularLocation>
</comment>
<comment type="similarity">
    <text evidence="1">Belongs to the AIR synthase family.</text>
</comment>
<name>PUR5_BACHK</name>
<dbReference type="EC" id="6.3.3.1" evidence="1"/>
<dbReference type="EMBL" id="AE017355">
    <property type="protein sequence ID" value="AAT58978.1"/>
    <property type="molecule type" value="Genomic_DNA"/>
</dbReference>
<dbReference type="RefSeq" id="WP_001262435.1">
    <property type="nucleotide sequence ID" value="NC_005957.1"/>
</dbReference>
<dbReference type="RefSeq" id="YP_034618.1">
    <property type="nucleotide sequence ID" value="NC_005957.1"/>
</dbReference>
<dbReference type="SMR" id="Q6HPA2"/>
<dbReference type="KEGG" id="btk:BT9727_0268"/>
<dbReference type="PATRIC" id="fig|281309.8.peg.285"/>
<dbReference type="HOGENOM" id="CLU_047116_0_0_9"/>
<dbReference type="UniPathway" id="UPA00074">
    <property type="reaction ID" value="UER00129"/>
</dbReference>
<dbReference type="Proteomes" id="UP000001301">
    <property type="component" value="Chromosome"/>
</dbReference>
<dbReference type="GO" id="GO:0005829">
    <property type="term" value="C:cytosol"/>
    <property type="evidence" value="ECO:0007669"/>
    <property type="project" value="TreeGrafter"/>
</dbReference>
<dbReference type="GO" id="GO:0005524">
    <property type="term" value="F:ATP binding"/>
    <property type="evidence" value="ECO:0007669"/>
    <property type="project" value="UniProtKB-KW"/>
</dbReference>
<dbReference type="GO" id="GO:0004637">
    <property type="term" value="F:phosphoribosylamine-glycine ligase activity"/>
    <property type="evidence" value="ECO:0007669"/>
    <property type="project" value="TreeGrafter"/>
</dbReference>
<dbReference type="GO" id="GO:0004641">
    <property type="term" value="F:phosphoribosylformylglycinamidine cyclo-ligase activity"/>
    <property type="evidence" value="ECO:0007669"/>
    <property type="project" value="UniProtKB-UniRule"/>
</dbReference>
<dbReference type="GO" id="GO:0006189">
    <property type="term" value="P:'de novo' IMP biosynthetic process"/>
    <property type="evidence" value="ECO:0007669"/>
    <property type="project" value="UniProtKB-UniRule"/>
</dbReference>
<dbReference type="GO" id="GO:0046084">
    <property type="term" value="P:adenine biosynthetic process"/>
    <property type="evidence" value="ECO:0007669"/>
    <property type="project" value="TreeGrafter"/>
</dbReference>
<dbReference type="CDD" id="cd02196">
    <property type="entry name" value="PurM"/>
    <property type="match status" value="1"/>
</dbReference>
<dbReference type="FunFam" id="3.30.1330.10:FF:000001">
    <property type="entry name" value="Phosphoribosylformylglycinamidine cyclo-ligase"/>
    <property type="match status" value="1"/>
</dbReference>
<dbReference type="FunFam" id="3.90.650.10:FF:000001">
    <property type="entry name" value="Phosphoribosylformylglycinamidine cyclo-ligase"/>
    <property type="match status" value="1"/>
</dbReference>
<dbReference type="Gene3D" id="3.90.650.10">
    <property type="entry name" value="PurM-like C-terminal domain"/>
    <property type="match status" value="1"/>
</dbReference>
<dbReference type="Gene3D" id="3.30.1330.10">
    <property type="entry name" value="PurM-like, N-terminal domain"/>
    <property type="match status" value="1"/>
</dbReference>
<dbReference type="HAMAP" id="MF_00741">
    <property type="entry name" value="AIRS"/>
    <property type="match status" value="1"/>
</dbReference>
<dbReference type="InterPro" id="IPR010918">
    <property type="entry name" value="PurM-like_C_dom"/>
</dbReference>
<dbReference type="InterPro" id="IPR036676">
    <property type="entry name" value="PurM-like_C_sf"/>
</dbReference>
<dbReference type="InterPro" id="IPR016188">
    <property type="entry name" value="PurM-like_N"/>
</dbReference>
<dbReference type="InterPro" id="IPR036921">
    <property type="entry name" value="PurM-like_N_sf"/>
</dbReference>
<dbReference type="InterPro" id="IPR004733">
    <property type="entry name" value="PurM_cligase"/>
</dbReference>
<dbReference type="NCBIfam" id="TIGR00878">
    <property type="entry name" value="purM"/>
    <property type="match status" value="1"/>
</dbReference>
<dbReference type="PANTHER" id="PTHR10520:SF12">
    <property type="entry name" value="TRIFUNCTIONAL PURINE BIOSYNTHETIC PROTEIN ADENOSINE-3"/>
    <property type="match status" value="1"/>
</dbReference>
<dbReference type="PANTHER" id="PTHR10520">
    <property type="entry name" value="TRIFUNCTIONAL PURINE BIOSYNTHETIC PROTEIN ADENOSINE-3-RELATED"/>
    <property type="match status" value="1"/>
</dbReference>
<dbReference type="Pfam" id="PF00586">
    <property type="entry name" value="AIRS"/>
    <property type="match status" value="1"/>
</dbReference>
<dbReference type="Pfam" id="PF02769">
    <property type="entry name" value="AIRS_C"/>
    <property type="match status" value="1"/>
</dbReference>
<dbReference type="SUPFAM" id="SSF56042">
    <property type="entry name" value="PurM C-terminal domain-like"/>
    <property type="match status" value="1"/>
</dbReference>
<dbReference type="SUPFAM" id="SSF55326">
    <property type="entry name" value="PurM N-terminal domain-like"/>
    <property type="match status" value="1"/>
</dbReference>
<organism>
    <name type="scientific">Bacillus thuringiensis subsp. konkukian (strain 97-27)</name>
    <dbReference type="NCBI Taxonomy" id="281309"/>
    <lineage>
        <taxon>Bacteria</taxon>
        <taxon>Bacillati</taxon>
        <taxon>Bacillota</taxon>
        <taxon>Bacilli</taxon>
        <taxon>Bacillales</taxon>
        <taxon>Bacillaceae</taxon>
        <taxon>Bacillus</taxon>
        <taxon>Bacillus cereus group</taxon>
    </lineage>
</organism>
<evidence type="ECO:0000255" key="1">
    <source>
        <dbReference type="HAMAP-Rule" id="MF_00741"/>
    </source>
</evidence>
<sequence length="346" mass="37256">MANAYKQAGVDIEAGYEAVSRMKKHVQTTMRKEVLGGLGGFGGMFDLSKFALEEPVLVSGTDGVGTKLMLAFMADKHDTIGIDAVAMCVNDIVVQGAEPLFFLDYIACGKAEPSKIENIVKGISEGCRQAGCALIGGETAEMPGMYSTEEYDLAGFTVGIVDKKKIVTGEKIEAGHVLIGLASSGIHSNGYSLVRKVLLEDGELSLDRIYGRLELPLGEELLKPTKIYVKPILELLKNHEVYGMAHITGGGFIENIPRMLPEGIGAEIELGSWKIQPIFSLLQEVGKLEEKEMFNIFNMGIGMVVAVKEEDAKDIVRLLEEQGETARIIGRTVKGAGVTFNGGKAL</sequence>
<protein>
    <recommendedName>
        <fullName evidence="1">Phosphoribosylformylglycinamidine cyclo-ligase</fullName>
        <ecNumber evidence="1">6.3.3.1</ecNumber>
    </recommendedName>
    <alternativeName>
        <fullName evidence="1">AIR synthase</fullName>
    </alternativeName>
    <alternativeName>
        <fullName evidence="1">AIRS</fullName>
    </alternativeName>
    <alternativeName>
        <fullName evidence="1">Phosphoribosyl-aminoimidazole synthetase</fullName>
    </alternativeName>
</protein>
<reference key="1">
    <citation type="journal article" date="2006" name="J. Bacteriol.">
        <title>Pathogenomic sequence analysis of Bacillus cereus and Bacillus thuringiensis isolates closely related to Bacillus anthracis.</title>
        <authorList>
            <person name="Han C.S."/>
            <person name="Xie G."/>
            <person name="Challacombe J.F."/>
            <person name="Altherr M.R."/>
            <person name="Bhotika S.S."/>
            <person name="Bruce D."/>
            <person name="Campbell C.S."/>
            <person name="Campbell M.L."/>
            <person name="Chen J."/>
            <person name="Chertkov O."/>
            <person name="Cleland C."/>
            <person name="Dimitrijevic M."/>
            <person name="Doggett N.A."/>
            <person name="Fawcett J.J."/>
            <person name="Glavina T."/>
            <person name="Goodwin L.A."/>
            <person name="Hill K.K."/>
            <person name="Hitchcock P."/>
            <person name="Jackson P.J."/>
            <person name="Keim P."/>
            <person name="Kewalramani A.R."/>
            <person name="Longmire J."/>
            <person name="Lucas S."/>
            <person name="Malfatti S."/>
            <person name="McMurry K."/>
            <person name="Meincke L.J."/>
            <person name="Misra M."/>
            <person name="Moseman B.L."/>
            <person name="Mundt M."/>
            <person name="Munk A.C."/>
            <person name="Okinaka R.T."/>
            <person name="Parson-Quintana B."/>
            <person name="Reilly L.P."/>
            <person name="Richardson P."/>
            <person name="Robinson D.L."/>
            <person name="Rubin E."/>
            <person name="Saunders E."/>
            <person name="Tapia R."/>
            <person name="Tesmer J.G."/>
            <person name="Thayer N."/>
            <person name="Thompson L.S."/>
            <person name="Tice H."/>
            <person name="Ticknor L.O."/>
            <person name="Wills P.L."/>
            <person name="Brettin T.S."/>
            <person name="Gilna P."/>
        </authorList>
    </citation>
    <scope>NUCLEOTIDE SEQUENCE [LARGE SCALE GENOMIC DNA]</scope>
    <source>
        <strain>97-27</strain>
    </source>
</reference>
<proteinExistence type="inferred from homology"/>
<accession>Q6HPA2</accession>
<keyword id="KW-0067">ATP-binding</keyword>
<keyword id="KW-0963">Cytoplasm</keyword>
<keyword id="KW-0436">Ligase</keyword>
<keyword id="KW-0547">Nucleotide-binding</keyword>
<keyword id="KW-0658">Purine biosynthesis</keyword>
<feature type="chain" id="PRO_0000258332" description="Phosphoribosylformylglycinamidine cyclo-ligase">
    <location>
        <begin position="1"/>
        <end position="346"/>
    </location>
</feature>
<gene>
    <name evidence="1" type="primary">purM</name>
    <name type="ordered locus">BT9727_0268</name>
</gene>